<proteinExistence type="inferred from homology"/>
<gene>
    <name evidence="1" type="primary">rpsJ</name>
    <name type="ordered locus">DMR_12190</name>
</gene>
<comment type="function">
    <text evidence="1">Involved in the binding of tRNA to the ribosomes.</text>
</comment>
<comment type="subunit">
    <text evidence="1">Part of the 30S ribosomal subunit.</text>
</comment>
<comment type="similarity">
    <text evidence="1">Belongs to the universal ribosomal protein uS10 family.</text>
</comment>
<organism>
    <name type="scientific">Solidesulfovibrio magneticus (strain ATCC 700980 / DSM 13731 / RS-1)</name>
    <name type="common">Desulfovibrio magneticus</name>
    <dbReference type="NCBI Taxonomy" id="573370"/>
    <lineage>
        <taxon>Bacteria</taxon>
        <taxon>Pseudomonadati</taxon>
        <taxon>Thermodesulfobacteriota</taxon>
        <taxon>Desulfovibrionia</taxon>
        <taxon>Desulfovibrionales</taxon>
        <taxon>Desulfovibrionaceae</taxon>
        <taxon>Solidesulfovibrio</taxon>
    </lineage>
</organism>
<feature type="chain" id="PRO_1000206581" description="Small ribosomal subunit protein uS10">
    <location>
        <begin position="1"/>
        <end position="105"/>
    </location>
</feature>
<accession>C4XLX2</accession>
<sequence>MVSMQNDRIRIKLKAYDYRILDKAVAEIVDTARNTGAGVAGPIPLPTDIHKVTVNRSVHVDKKSREQFEMRVHKRLLDIMEPTQQTVDALGKLSLPAGVDVEIKL</sequence>
<protein>
    <recommendedName>
        <fullName evidence="1">Small ribosomal subunit protein uS10</fullName>
    </recommendedName>
    <alternativeName>
        <fullName evidence="2">30S ribosomal protein S10</fullName>
    </alternativeName>
</protein>
<reference key="1">
    <citation type="journal article" date="2009" name="Genome Res.">
        <title>Whole genome sequence of Desulfovibrio magneticus strain RS-1 revealed common gene clusters in magnetotactic bacteria.</title>
        <authorList>
            <person name="Nakazawa H."/>
            <person name="Arakaki A."/>
            <person name="Narita-Yamada S."/>
            <person name="Yashiro I."/>
            <person name="Jinno K."/>
            <person name="Aoki N."/>
            <person name="Tsuruyama A."/>
            <person name="Okamura Y."/>
            <person name="Tanikawa S."/>
            <person name="Fujita N."/>
            <person name="Takeyama H."/>
            <person name="Matsunaga T."/>
        </authorList>
    </citation>
    <scope>NUCLEOTIDE SEQUENCE [LARGE SCALE GENOMIC DNA]</scope>
    <source>
        <strain>ATCC 700980 / DSM 13731 / RS-1</strain>
    </source>
</reference>
<name>RS10_SOLM1</name>
<evidence type="ECO:0000255" key="1">
    <source>
        <dbReference type="HAMAP-Rule" id="MF_00508"/>
    </source>
</evidence>
<evidence type="ECO:0000305" key="2"/>
<keyword id="KW-0687">Ribonucleoprotein</keyword>
<keyword id="KW-0689">Ribosomal protein</keyword>
<dbReference type="EMBL" id="AP010904">
    <property type="protein sequence ID" value="BAH74710.1"/>
    <property type="molecule type" value="Genomic_DNA"/>
</dbReference>
<dbReference type="RefSeq" id="WP_006920465.1">
    <property type="nucleotide sequence ID" value="NC_012796.1"/>
</dbReference>
<dbReference type="SMR" id="C4XLX2"/>
<dbReference type="STRING" id="573370.DMR_12190"/>
<dbReference type="KEGG" id="dma:DMR_12190"/>
<dbReference type="eggNOG" id="COG0051">
    <property type="taxonomic scope" value="Bacteria"/>
</dbReference>
<dbReference type="HOGENOM" id="CLU_122625_1_3_7"/>
<dbReference type="OrthoDB" id="9804464at2"/>
<dbReference type="Proteomes" id="UP000009071">
    <property type="component" value="Chromosome"/>
</dbReference>
<dbReference type="GO" id="GO:1990904">
    <property type="term" value="C:ribonucleoprotein complex"/>
    <property type="evidence" value="ECO:0007669"/>
    <property type="project" value="UniProtKB-KW"/>
</dbReference>
<dbReference type="GO" id="GO:0005840">
    <property type="term" value="C:ribosome"/>
    <property type="evidence" value="ECO:0007669"/>
    <property type="project" value="UniProtKB-KW"/>
</dbReference>
<dbReference type="GO" id="GO:0003735">
    <property type="term" value="F:structural constituent of ribosome"/>
    <property type="evidence" value="ECO:0007669"/>
    <property type="project" value="InterPro"/>
</dbReference>
<dbReference type="GO" id="GO:0000049">
    <property type="term" value="F:tRNA binding"/>
    <property type="evidence" value="ECO:0007669"/>
    <property type="project" value="UniProtKB-UniRule"/>
</dbReference>
<dbReference type="GO" id="GO:0006412">
    <property type="term" value="P:translation"/>
    <property type="evidence" value="ECO:0007669"/>
    <property type="project" value="UniProtKB-UniRule"/>
</dbReference>
<dbReference type="FunFam" id="3.30.70.600:FF:000003">
    <property type="entry name" value="30S ribosomal protein S10"/>
    <property type="match status" value="1"/>
</dbReference>
<dbReference type="Gene3D" id="3.30.70.600">
    <property type="entry name" value="Ribosomal protein S10 domain"/>
    <property type="match status" value="1"/>
</dbReference>
<dbReference type="HAMAP" id="MF_00508">
    <property type="entry name" value="Ribosomal_uS10"/>
    <property type="match status" value="1"/>
</dbReference>
<dbReference type="InterPro" id="IPR001848">
    <property type="entry name" value="Ribosomal_uS10"/>
</dbReference>
<dbReference type="InterPro" id="IPR018268">
    <property type="entry name" value="Ribosomal_uS10_CS"/>
</dbReference>
<dbReference type="InterPro" id="IPR027486">
    <property type="entry name" value="Ribosomal_uS10_dom"/>
</dbReference>
<dbReference type="InterPro" id="IPR036838">
    <property type="entry name" value="Ribosomal_uS10_dom_sf"/>
</dbReference>
<dbReference type="NCBIfam" id="NF001861">
    <property type="entry name" value="PRK00596.1"/>
    <property type="match status" value="1"/>
</dbReference>
<dbReference type="NCBIfam" id="TIGR01049">
    <property type="entry name" value="rpsJ_bact"/>
    <property type="match status" value="1"/>
</dbReference>
<dbReference type="PANTHER" id="PTHR11700">
    <property type="entry name" value="30S RIBOSOMAL PROTEIN S10 FAMILY MEMBER"/>
    <property type="match status" value="1"/>
</dbReference>
<dbReference type="Pfam" id="PF00338">
    <property type="entry name" value="Ribosomal_S10"/>
    <property type="match status" value="1"/>
</dbReference>
<dbReference type="PRINTS" id="PR00971">
    <property type="entry name" value="RIBOSOMALS10"/>
</dbReference>
<dbReference type="SMART" id="SM01403">
    <property type="entry name" value="Ribosomal_S10"/>
    <property type="match status" value="1"/>
</dbReference>
<dbReference type="SUPFAM" id="SSF54999">
    <property type="entry name" value="Ribosomal protein S10"/>
    <property type="match status" value="1"/>
</dbReference>
<dbReference type="PROSITE" id="PS00361">
    <property type="entry name" value="RIBOSOMAL_S10"/>
    <property type="match status" value="1"/>
</dbReference>